<keyword id="KW-0002">3D-structure</keyword>
<keyword id="KW-0025">Alternative splicing</keyword>
<keyword id="KW-0489">Methyltransferase</keyword>
<keyword id="KW-0597">Phosphoprotein</keyword>
<keyword id="KW-1185">Reference proteome</keyword>
<keyword id="KW-0949">S-adenosyl-L-methionine</keyword>
<keyword id="KW-0808">Transferase</keyword>
<comment type="function">
    <text evidence="3 5">S-adenosyl-L-methionine-dependent methyltransferase. Involved in glucosinolate metabolism and defense against phytopathogens. Highly reactive to thiocyanate (NCS(-)) derived from myrosinase-mediated hydrolysis of glucosinolates upon tissue damage.</text>
</comment>
<comment type="catalytic activity">
    <reaction evidence="3">
        <text>thiocyanate + S-adenosyl-L-methionine = methyl thiocyanate + S-adenosyl-L-homocysteine</text>
        <dbReference type="Rhea" id="RHEA:28014"/>
        <dbReference type="ChEBI" id="CHEBI:18022"/>
        <dbReference type="ChEBI" id="CHEBI:57856"/>
        <dbReference type="ChEBI" id="CHEBI:59789"/>
        <dbReference type="ChEBI" id="CHEBI:61112"/>
        <dbReference type="EC" id="2.1.1.n4"/>
    </reaction>
</comment>
<comment type="biophysicochemical properties">
    <kinetics>
        <KM evidence="3">62 uM for KSCN</KM>
        <KM evidence="3">280 mM for KCL</KM>
        <KM evidence="3">0.26 mM for ammonium sulfide</KM>
        <KM evidence="3">92 uM for S-adenosyl-L-methionine</KM>
        <Vmax evidence="3">2.2 umol/sec/mg enzyme toward KSCN</Vmax>
        <Vmax evidence="3">82.0 nmol/sec/mg enzyme toward KCL</Vmax>
        <Vmax evidence="3">2.6 umol/sec/mg enzyme toward ammonium sulfide</Vmax>
        <Vmax evidence="3">1.4 umol/sec/mg enzyme toward S-adenosyl-L-methionine</Vmax>
    </kinetics>
</comment>
<comment type="alternative products">
    <event type="alternative splicing"/>
    <isoform>
        <id>Q0WP12-1</id>
        <name>1</name>
        <sequence type="displayed"/>
    </isoform>
    <isoform>
        <id>Q0WP12-2</id>
        <name>2</name>
        <sequence type="described" ref="VSP_059984"/>
    </isoform>
    <isoform>
        <id>Q0WP12-3</id>
        <name>3</name>
        <sequence type="described" ref="VSP_038905"/>
    </isoform>
</comment>
<comment type="tissue specificity">
    <text evidence="2">Expressed in shoots, leaves, stems, inflorescences, flowers and green siliques.</text>
</comment>
<comment type="disruption phenotype">
    <text evidence="2 3">No visible phenotype under normal growth conditions. Increased sensitivity to thiocyanate in medium and lower methyl halide emissions.</text>
</comment>
<comment type="similarity">
    <text evidence="1">Belongs to the class I-like SAM-binding methyltransferase superfamily. TPMT family.</text>
</comment>
<feature type="chain" id="PRO_0000393277" description="Thiocyanate methyltransferase 1">
    <location>
        <begin position="1"/>
        <end position="227"/>
    </location>
</feature>
<feature type="binding site" evidence="4 12">
    <location>
        <position position="36"/>
    </location>
    <ligand>
        <name>S-adenosyl-L-methionine</name>
        <dbReference type="ChEBI" id="CHEBI:59789"/>
    </ligand>
</feature>
<feature type="binding site" evidence="1 4 12">
    <location>
        <position position="40"/>
    </location>
    <ligand>
        <name>S-adenosyl-L-methionine</name>
        <dbReference type="ChEBI" id="CHEBI:59789"/>
    </ligand>
</feature>
<feature type="binding site" evidence="4 12">
    <location>
        <position position="47"/>
    </location>
    <ligand>
        <name>S-adenosyl-L-methionine</name>
        <dbReference type="ChEBI" id="CHEBI:59789"/>
    </ligand>
</feature>
<feature type="binding site" evidence="4 12">
    <location>
        <position position="74"/>
    </location>
    <ligand>
        <name>S-adenosyl-L-methionine</name>
        <dbReference type="ChEBI" id="CHEBI:59789"/>
    </ligand>
</feature>
<feature type="binding site" evidence="1 4 12">
    <location>
        <position position="95"/>
    </location>
    <ligand>
        <name>S-adenosyl-L-methionine</name>
        <dbReference type="ChEBI" id="CHEBI:59789"/>
    </ligand>
</feature>
<feature type="binding site" evidence="4 12">
    <location>
        <begin position="123"/>
        <end position="124"/>
    </location>
    <ligand>
        <name>S-adenosyl-L-methionine</name>
        <dbReference type="ChEBI" id="CHEBI:59789"/>
    </ligand>
</feature>
<feature type="binding site" evidence="4 12">
    <location>
        <position position="139"/>
    </location>
    <ligand>
        <name>S-adenosyl-L-methionine</name>
        <dbReference type="ChEBI" id="CHEBI:59789"/>
    </ligand>
</feature>
<feature type="modified residue" description="Phosphoserine" evidence="13">
    <location>
        <position position="86"/>
    </location>
</feature>
<feature type="splice variant" id="VSP_038905" description="In isoform 3." evidence="8">
    <location>
        <begin position="1"/>
        <end position="83"/>
    </location>
</feature>
<feature type="splice variant" id="VSP_059984" description="In isoform 2." evidence="9">
    <original>KGKEKLGRWKKIN</original>
    <variation>QREAGKVEEDQLIPKKEILLFGKSVICVIYKE</variation>
    <location>
        <begin position="215"/>
        <end position="227"/>
    </location>
</feature>
<feature type="helix" evidence="14">
    <location>
        <begin position="20"/>
        <end position="41"/>
    </location>
</feature>
<feature type="helix" evidence="14">
    <location>
        <begin position="54"/>
        <end position="61"/>
    </location>
</feature>
<feature type="strand" evidence="14">
    <location>
        <begin position="68"/>
        <end position="73"/>
    </location>
</feature>
<feature type="helix" evidence="14">
    <location>
        <begin position="79"/>
        <end position="84"/>
    </location>
</feature>
<feature type="strand" evidence="14">
    <location>
        <begin position="89"/>
        <end position="94"/>
    </location>
</feature>
<feature type="helix" evidence="14">
    <location>
        <begin position="98"/>
        <end position="108"/>
    </location>
</feature>
<feature type="helix" evidence="14">
    <location>
        <begin position="112"/>
        <end position="116"/>
    </location>
</feature>
<feature type="strand" evidence="14">
    <location>
        <begin position="117"/>
        <end position="120"/>
    </location>
</feature>
<feature type="turn" evidence="14">
    <location>
        <begin position="124"/>
        <end position="126"/>
    </location>
</feature>
<feature type="strand" evidence="14">
    <location>
        <begin position="133"/>
        <end position="141"/>
    </location>
</feature>
<feature type="turn" evidence="14">
    <location>
        <begin position="142"/>
        <end position="144"/>
    </location>
</feature>
<feature type="helix" evidence="14">
    <location>
        <begin position="147"/>
        <end position="149"/>
    </location>
</feature>
<feature type="helix" evidence="14">
    <location>
        <begin position="150"/>
        <end position="160"/>
    </location>
</feature>
<feature type="strand" evidence="14">
    <location>
        <begin position="161"/>
        <end position="171"/>
    </location>
</feature>
<feature type="helix" evidence="14">
    <location>
        <begin position="187"/>
        <end position="194"/>
    </location>
</feature>
<feature type="helix" evidence="14">
    <location>
        <begin position="195"/>
        <end position="197"/>
    </location>
</feature>
<feature type="strand" evidence="14">
    <location>
        <begin position="199"/>
        <end position="206"/>
    </location>
</feature>
<feature type="turn" evidence="14">
    <location>
        <begin position="212"/>
        <end position="216"/>
    </location>
</feature>
<feature type="strand" evidence="14">
    <location>
        <begin position="219"/>
        <end position="226"/>
    </location>
</feature>
<dbReference type="EC" id="2.1.1.n4" evidence="1 3"/>
<dbReference type="EMBL" id="AC004005">
    <property type="protein sequence ID" value="AAC23400.1"/>
    <property type="molecule type" value="Genomic_DNA"/>
</dbReference>
<dbReference type="EMBL" id="CP002685">
    <property type="protein sequence ID" value="AEC10343.1"/>
    <property type="molecule type" value="Genomic_DNA"/>
</dbReference>
<dbReference type="EMBL" id="AY044314">
    <property type="protein sequence ID" value="AAK73255.1"/>
    <property type="molecule type" value="mRNA"/>
</dbReference>
<dbReference type="EMBL" id="AY086360">
    <property type="protein sequence ID" value="AAM64428.1"/>
    <property type="molecule type" value="mRNA"/>
</dbReference>
<dbReference type="EMBL" id="AK229273">
    <property type="protein sequence ID" value="BAF01137.1"/>
    <property type="molecule type" value="mRNA"/>
</dbReference>
<dbReference type="EMBL" id="AK319169">
    <property type="protein sequence ID" value="BAH57284.1"/>
    <property type="molecule type" value="mRNA"/>
</dbReference>
<dbReference type="PIR" id="T00671">
    <property type="entry name" value="T00671"/>
</dbReference>
<dbReference type="RefSeq" id="NP_181919.1">
    <molecule id="Q0WP12-1"/>
    <property type="nucleotide sequence ID" value="NM_129953.3"/>
</dbReference>
<dbReference type="PDB" id="3LCC">
    <property type="method" value="X-ray"/>
    <property type="resolution" value="1.80 A"/>
    <property type="chains" value="A=1-227"/>
</dbReference>
<dbReference type="PDBsum" id="3LCC"/>
<dbReference type="SMR" id="Q0WP12"/>
<dbReference type="BioGRID" id="4331">
    <property type="interactions" value="1"/>
</dbReference>
<dbReference type="FunCoup" id="Q0WP12">
    <property type="interactions" value="170"/>
</dbReference>
<dbReference type="STRING" id="3702.Q0WP12"/>
<dbReference type="GlyGen" id="Q0WP12">
    <property type="glycosylation" value="1 site"/>
</dbReference>
<dbReference type="iPTMnet" id="Q0WP12"/>
<dbReference type="PaxDb" id="3702-AT2G43910.2"/>
<dbReference type="ProteomicsDB" id="230214">
    <molecule id="Q0WP12-1"/>
</dbReference>
<dbReference type="DNASU" id="818995"/>
<dbReference type="EnsemblPlants" id="AT2G43910.1">
    <molecule id="Q0WP12-1"/>
    <property type="protein sequence ID" value="AT2G43910.1"/>
    <property type="gene ID" value="AT2G43910"/>
</dbReference>
<dbReference type="GeneID" id="818995"/>
<dbReference type="Gramene" id="AT2G43910.1">
    <molecule id="Q0WP12-1"/>
    <property type="protein sequence ID" value="AT2G43910.1"/>
    <property type="gene ID" value="AT2G43910"/>
</dbReference>
<dbReference type="KEGG" id="ath:AT2G43910"/>
<dbReference type="Araport" id="AT2G43910"/>
<dbReference type="TAIR" id="AT2G43910">
    <property type="gene designation" value="HOL1"/>
</dbReference>
<dbReference type="eggNOG" id="ENOG502QS1V">
    <property type="taxonomic scope" value="Eukaryota"/>
</dbReference>
<dbReference type="InParanoid" id="Q0WP12"/>
<dbReference type="OMA" id="LCFSDAG"/>
<dbReference type="PhylomeDB" id="Q0WP12"/>
<dbReference type="BRENDA" id="2.1.1.165">
    <property type="organism ID" value="399"/>
</dbReference>
<dbReference type="BRENDA" id="2.1.1.9">
    <property type="organism ID" value="399"/>
</dbReference>
<dbReference type="SABIO-RK" id="Q0WP12"/>
<dbReference type="CD-CODE" id="4299E36E">
    <property type="entry name" value="Nucleolus"/>
</dbReference>
<dbReference type="EvolutionaryTrace" id="Q0WP12"/>
<dbReference type="PRO" id="PR:Q0WP12"/>
<dbReference type="Proteomes" id="UP000006548">
    <property type="component" value="Chromosome 2"/>
</dbReference>
<dbReference type="ExpressionAtlas" id="Q0WP12">
    <property type="expression patterns" value="baseline and differential"/>
</dbReference>
<dbReference type="GO" id="GO:0005829">
    <property type="term" value="C:cytosol"/>
    <property type="evidence" value="ECO:0007005"/>
    <property type="project" value="TAIR"/>
</dbReference>
<dbReference type="GO" id="GO:0005886">
    <property type="term" value="C:plasma membrane"/>
    <property type="evidence" value="ECO:0007005"/>
    <property type="project" value="TAIR"/>
</dbReference>
<dbReference type="GO" id="GO:0102215">
    <property type="term" value="F:thiocyanate methyltransferase activity"/>
    <property type="evidence" value="ECO:0007669"/>
    <property type="project" value="RHEA"/>
</dbReference>
<dbReference type="GO" id="GO:0018708">
    <property type="term" value="F:thiol S-methyltransferase activity"/>
    <property type="evidence" value="ECO:0000314"/>
    <property type="project" value="UniProtKB"/>
</dbReference>
<dbReference type="GO" id="GO:0006952">
    <property type="term" value="P:defense response"/>
    <property type="evidence" value="ECO:0000315"/>
    <property type="project" value="UniProtKB"/>
</dbReference>
<dbReference type="GO" id="GO:0019762">
    <property type="term" value="P:glucosinolate catabolic process"/>
    <property type="evidence" value="ECO:0000314"/>
    <property type="project" value="UniProtKB"/>
</dbReference>
<dbReference type="GO" id="GO:0032259">
    <property type="term" value="P:methylation"/>
    <property type="evidence" value="ECO:0007669"/>
    <property type="project" value="UniProtKB-KW"/>
</dbReference>
<dbReference type="CDD" id="cd02440">
    <property type="entry name" value="AdoMet_MTases"/>
    <property type="match status" value="1"/>
</dbReference>
<dbReference type="FunFam" id="3.40.50.150:FF:000281">
    <property type="entry name" value="Thiocyanate methyltransferase 1"/>
    <property type="match status" value="1"/>
</dbReference>
<dbReference type="Gene3D" id="3.40.50.150">
    <property type="entry name" value="Vaccinia Virus protein VP39"/>
    <property type="match status" value="1"/>
</dbReference>
<dbReference type="InterPro" id="IPR029063">
    <property type="entry name" value="SAM-dependent_MTases_sf"/>
</dbReference>
<dbReference type="InterPro" id="IPR008854">
    <property type="entry name" value="TPMT"/>
</dbReference>
<dbReference type="PANTHER" id="PTHR32183">
    <property type="match status" value="1"/>
</dbReference>
<dbReference type="PANTHER" id="PTHR32183:SF13">
    <property type="entry name" value="THIOCYANATE METHYLTRANSFERASE 1"/>
    <property type="match status" value="1"/>
</dbReference>
<dbReference type="Pfam" id="PF05724">
    <property type="entry name" value="TPMT"/>
    <property type="match status" value="1"/>
</dbReference>
<dbReference type="SUPFAM" id="SSF53335">
    <property type="entry name" value="S-adenosyl-L-methionine-dependent methyltransferases"/>
    <property type="match status" value="1"/>
</dbReference>
<dbReference type="PROSITE" id="PS51585">
    <property type="entry name" value="SAM_MT_TPMT"/>
    <property type="match status" value="1"/>
</dbReference>
<gene>
    <name evidence="6" type="primary">HOL1</name>
    <name evidence="10" type="ordered locus">At2g43910</name>
    <name evidence="11" type="ORF">F6E13.4</name>
</gene>
<evidence type="ECO:0000255" key="1">
    <source>
        <dbReference type="PROSITE-ProRule" id="PRU00918"/>
    </source>
</evidence>
<evidence type="ECO:0000269" key="2">
    <source>
    </source>
</evidence>
<evidence type="ECO:0000269" key="3">
    <source>
    </source>
</evidence>
<evidence type="ECO:0000269" key="4">
    <source>
    </source>
</evidence>
<evidence type="ECO:0000269" key="5">
    <source ref="8"/>
</evidence>
<evidence type="ECO:0000303" key="6">
    <source>
    </source>
</evidence>
<evidence type="ECO:0000303" key="7">
    <source>
    </source>
</evidence>
<evidence type="ECO:0000303" key="8">
    <source>
    </source>
</evidence>
<evidence type="ECO:0000303" key="9">
    <source ref="5"/>
</evidence>
<evidence type="ECO:0000312" key="10">
    <source>
        <dbReference type="Araport" id="AT2G43910"/>
    </source>
</evidence>
<evidence type="ECO:0000312" key="11">
    <source>
        <dbReference type="EMBL" id="AAC23400.1"/>
    </source>
</evidence>
<evidence type="ECO:0007744" key="12">
    <source>
        <dbReference type="PDB" id="3LCC"/>
    </source>
</evidence>
<evidence type="ECO:0007744" key="13">
    <source>
    </source>
</evidence>
<evidence type="ECO:0007829" key="14">
    <source>
        <dbReference type="PDB" id="3LCC"/>
    </source>
</evidence>
<accession>Q0WP12</accession>
<accession>C0Z3K5</accession>
<accession>O80561</accession>
<reference key="1">
    <citation type="journal article" date="1999" name="Nature">
        <title>Sequence and analysis of chromosome 2 of the plant Arabidopsis thaliana.</title>
        <authorList>
            <person name="Lin X."/>
            <person name="Kaul S."/>
            <person name="Rounsley S.D."/>
            <person name="Shea T.P."/>
            <person name="Benito M.-I."/>
            <person name="Town C.D."/>
            <person name="Fujii C.Y."/>
            <person name="Mason T.M."/>
            <person name="Bowman C.L."/>
            <person name="Barnstead M.E."/>
            <person name="Feldblyum T.V."/>
            <person name="Buell C.R."/>
            <person name="Ketchum K.A."/>
            <person name="Lee J.J."/>
            <person name="Ronning C.M."/>
            <person name="Koo H.L."/>
            <person name="Moffat K.S."/>
            <person name="Cronin L.A."/>
            <person name="Shen M."/>
            <person name="Pai G."/>
            <person name="Van Aken S."/>
            <person name="Umayam L."/>
            <person name="Tallon L.J."/>
            <person name="Gill J.E."/>
            <person name="Adams M.D."/>
            <person name="Carrera A.J."/>
            <person name="Creasy T.H."/>
            <person name="Goodman H.M."/>
            <person name="Somerville C.R."/>
            <person name="Copenhaver G.P."/>
            <person name="Preuss D."/>
            <person name="Nierman W.C."/>
            <person name="White O."/>
            <person name="Eisen J.A."/>
            <person name="Salzberg S.L."/>
            <person name="Fraser C.M."/>
            <person name="Venter J.C."/>
        </authorList>
    </citation>
    <scope>NUCLEOTIDE SEQUENCE [LARGE SCALE GENOMIC DNA]</scope>
    <source>
        <strain>cv. Columbia</strain>
    </source>
</reference>
<reference key="2">
    <citation type="journal article" date="2017" name="Plant J.">
        <title>Araport11: a complete reannotation of the Arabidopsis thaliana reference genome.</title>
        <authorList>
            <person name="Cheng C.Y."/>
            <person name="Krishnakumar V."/>
            <person name="Chan A.P."/>
            <person name="Thibaud-Nissen F."/>
            <person name="Schobel S."/>
            <person name="Town C.D."/>
        </authorList>
    </citation>
    <scope>GENOME REANNOTATION</scope>
    <source>
        <strain>cv. Columbia</strain>
    </source>
</reference>
<reference key="3">
    <citation type="journal article" date="2003" name="Science">
        <title>Empirical analysis of transcriptional activity in the Arabidopsis genome.</title>
        <authorList>
            <person name="Yamada K."/>
            <person name="Lim J."/>
            <person name="Dale J.M."/>
            <person name="Chen H."/>
            <person name="Shinn P."/>
            <person name="Palm C.J."/>
            <person name="Southwick A.M."/>
            <person name="Wu H.C."/>
            <person name="Kim C.J."/>
            <person name="Nguyen M."/>
            <person name="Pham P.K."/>
            <person name="Cheuk R.F."/>
            <person name="Karlin-Newmann G."/>
            <person name="Liu S.X."/>
            <person name="Lam B."/>
            <person name="Sakano H."/>
            <person name="Wu T."/>
            <person name="Yu G."/>
            <person name="Miranda M."/>
            <person name="Quach H.L."/>
            <person name="Tripp M."/>
            <person name="Chang C.H."/>
            <person name="Lee J.M."/>
            <person name="Toriumi M.J."/>
            <person name="Chan M.M."/>
            <person name="Tang C.C."/>
            <person name="Onodera C.S."/>
            <person name="Deng J.M."/>
            <person name="Akiyama K."/>
            <person name="Ansari Y."/>
            <person name="Arakawa T."/>
            <person name="Banh J."/>
            <person name="Banno F."/>
            <person name="Bowser L."/>
            <person name="Brooks S.Y."/>
            <person name="Carninci P."/>
            <person name="Chao Q."/>
            <person name="Choy N."/>
            <person name="Enju A."/>
            <person name="Goldsmith A.D."/>
            <person name="Gurjal M."/>
            <person name="Hansen N.F."/>
            <person name="Hayashizaki Y."/>
            <person name="Johnson-Hopson C."/>
            <person name="Hsuan V.W."/>
            <person name="Iida K."/>
            <person name="Karnes M."/>
            <person name="Khan S."/>
            <person name="Koesema E."/>
            <person name="Ishida J."/>
            <person name="Jiang P.X."/>
            <person name="Jones T."/>
            <person name="Kawai J."/>
            <person name="Kamiya A."/>
            <person name="Meyers C."/>
            <person name="Nakajima M."/>
            <person name="Narusaka M."/>
            <person name="Seki M."/>
            <person name="Sakurai T."/>
            <person name="Satou M."/>
            <person name="Tamse R."/>
            <person name="Vaysberg M."/>
            <person name="Wallender E.K."/>
            <person name="Wong C."/>
            <person name="Yamamura Y."/>
            <person name="Yuan S."/>
            <person name="Shinozaki K."/>
            <person name="Davis R.W."/>
            <person name="Theologis A."/>
            <person name="Ecker J.R."/>
        </authorList>
    </citation>
    <scope>NUCLEOTIDE SEQUENCE [LARGE SCALE MRNA] (ISOFORM 1)</scope>
    <source>
        <strain>cv. Columbia</strain>
    </source>
</reference>
<reference key="4">
    <citation type="submission" date="2002-03" db="EMBL/GenBank/DDBJ databases">
        <title>Full-length cDNA from Arabidopsis thaliana.</title>
        <authorList>
            <person name="Brover V.V."/>
            <person name="Troukhan M.E."/>
            <person name="Alexandrov N.A."/>
            <person name="Lu Y.-P."/>
            <person name="Flavell R.B."/>
            <person name="Feldmann K.A."/>
        </authorList>
    </citation>
    <scope>NUCLEOTIDE SEQUENCE [LARGE SCALE MRNA] (ISOFORM 1)</scope>
</reference>
<reference key="5">
    <citation type="submission" date="2006-07" db="EMBL/GenBank/DDBJ databases">
        <title>Large-scale analysis of RIKEN Arabidopsis full-length (RAFL) cDNAs.</title>
        <authorList>
            <person name="Totoki Y."/>
            <person name="Seki M."/>
            <person name="Ishida J."/>
            <person name="Nakajima M."/>
            <person name="Enju A."/>
            <person name="Kamiya A."/>
            <person name="Narusaka M."/>
            <person name="Shin-i T."/>
            <person name="Nakagawa M."/>
            <person name="Sakamoto N."/>
            <person name="Oishi K."/>
            <person name="Kohara Y."/>
            <person name="Kobayashi M."/>
            <person name="Toyoda A."/>
            <person name="Sakaki Y."/>
            <person name="Sakurai T."/>
            <person name="Iida K."/>
            <person name="Akiyama K."/>
            <person name="Satou M."/>
            <person name="Toyoda T."/>
            <person name="Konagaya A."/>
            <person name="Carninci P."/>
            <person name="Kawai J."/>
            <person name="Hayashizaki Y."/>
            <person name="Shinozaki K."/>
        </authorList>
    </citation>
    <scope>NUCLEOTIDE SEQUENCE [LARGE SCALE MRNA] (ISOFORM 2)</scope>
    <source>
        <strain>cv. Columbia</strain>
    </source>
</reference>
<reference key="6">
    <citation type="journal article" date="2009" name="DNA Res.">
        <title>Analysis of multiple occurrences of alternative splicing events in Arabidopsis thaliana using novel sequenced full-length cDNAs.</title>
        <authorList>
            <person name="Iida K."/>
            <person name="Fukami-Kobayashi K."/>
            <person name="Toyoda A."/>
            <person name="Sakaki Y."/>
            <person name="Kobayashi M."/>
            <person name="Seki M."/>
            <person name="Shinozaki K."/>
        </authorList>
    </citation>
    <scope>NUCLEOTIDE SEQUENCE [LARGE SCALE MRNA] (ISOFORM 3)</scope>
    <source>
        <strain>cv. Columbia</strain>
    </source>
</reference>
<reference key="7">
    <citation type="journal article" date="2003" name="Curr. Biol.">
        <title>Genetic control of methyl halide production in Arabidopsis.</title>
        <authorList>
            <person name="Rhew R.C."/>
            <person name="Ostergaard L."/>
            <person name="Saltzman E.S."/>
            <person name="Yanofsky M.F."/>
        </authorList>
    </citation>
    <scope>IDENTIFICATION</scope>
    <scope>TISSUE SPECIFICITY</scope>
    <scope>DISRUPTION PHENOTYPE</scope>
</reference>
<reference key="8">
    <citation type="journal article" date="2007" name="Plant Biotechnol.">
        <title>Characterization of three halide methyltransferases in Arabidopsis thaliana.</title>
        <authorList>
            <person name="Nagatoshi Y."/>
            <person name="Nakamura T."/>
        </authorList>
    </citation>
    <scope>FUNCTION</scope>
</reference>
<reference key="9">
    <citation type="journal article" date="2009" name="J. Biol. Chem.">
        <title>Arabidopsis HARMLESS TO OZONE LAYER protein methylates a glucosinolate breakdown product and functions in resistance to Pseudomonas syringae pv. maculicola.</title>
        <authorList>
            <person name="Nagatoshi Y."/>
            <person name="Nakamura T."/>
        </authorList>
    </citation>
    <scope>FUNCTION</scope>
    <scope>CATALYTIC ACTIVITY</scope>
    <scope>BIOPHYSICOCHEMICAL PROPERTIES</scope>
    <scope>DISRUPTION PHENOTYPE</scope>
</reference>
<reference key="10">
    <citation type="journal article" date="2009" name="Plant Physiol.">
        <title>Large-scale Arabidopsis phosphoproteome profiling reveals novel chloroplast kinase substrates and phosphorylation networks.</title>
        <authorList>
            <person name="Reiland S."/>
            <person name="Messerli G."/>
            <person name="Baerenfaller K."/>
            <person name="Gerrits B."/>
            <person name="Endler A."/>
            <person name="Grossmann J."/>
            <person name="Gruissem W."/>
            <person name="Baginsky S."/>
        </authorList>
    </citation>
    <scope>PHOSPHORYLATION [LARGE SCALE ANALYSIS] AT SER-86</scope>
    <scope>IDENTIFICATION BY MASS SPECTROMETRY [LARGE SCALE ANALYSIS]</scope>
</reference>
<reference key="11">
    <citation type="journal article" date="2010" name="Angew. Chem. Int. Ed. Engl.">
        <title>Halomethane biosynthesis: structure of a SAM-dependent halide methyltransferase from Arabidopsis thaliana.</title>
        <authorList>
            <person name="Schmidberger J.W."/>
            <person name="James A.B."/>
            <person name="Edwards R."/>
            <person name="Naismith J.H."/>
            <person name="O'Hagan D."/>
        </authorList>
    </citation>
    <scope>X-RAY CRYSTALLOGRAPHY (1.80 ANGSTROMS) OF 1-227 IN COMPLEX WITH S-ADENOSYL-L-HOMOCYSTEINE</scope>
</reference>
<proteinExistence type="evidence at protein level"/>
<protein>
    <recommendedName>
        <fullName evidence="7">Thiocyanate methyltransferase 1</fullName>
        <ecNumber evidence="1 3">2.1.1.n4</ecNumber>
    </recommendedName>
    <alternativeName>
        <fullName evidence="6">Protein HARMLESS TO OZONE LAYER 1</fullName>
        <shortName evidence="6">AtHOL1</shortName>
    </alternativeName>
</protein>
<organism>
    <name type="scientific">Arabidopsis thaliana</name>
    <name type="common">Mouse-ear cress</name>
    <dbReference type="NCBI Taxonomy" id="3702"/>
    <lineage>
        <taxon>Eukaryota</taxon>
        <taxon>Viridiplantae</taxon>
        <taxon>Streptophyta</taxon>
        <taxon>Embryophyta</taxon>
        <taxon>Tracheophyta</taxon>
        <taxon>Spermatophyta</taxon>
        <taxon>Magnoliopsida</taxon>
        <taxon>eudicotyledons</taxon>
        <taxon>Gunneridae</taxon>
        <taxon>Pentapetalae</taxon>
        <taxon>rosids</taxon>
        <taxon>malvids</taxon>
        <taxon>Brassicales</taxon>
        <taxon>Brassicaceae</taxon>
        <taxon>Camelineae</taxon>
        <taxon>Arabidopsis</taxon>
    </lineage>
</organism>
<sequence>MAEEQQNSDQSNGGNVIPTPEEVATFLHKTVEEGGWEKCWEEEITPWDQGRATPLIVHLVDTSSLPLGRALVPGCGGGHDVVAMASPERFVVGLDISESALAKANETYGSSPKAEYFSFVKEDVFTWRPTELFDLIFDYVFFCAIEPEMRPAWAKSMYELLKPDGELITLMYPITDHVGGPPYKVDVSTFEEVLVPIGFKAVSVEENPHAIPTRKGKEKLGRWKKIN</sequence>
<name>HOL1_ARATH</name>